<dbReference type="EMBL" id="CP000817">
    <property type="protein sequence ID" value="ACA38627.1"/>
    <property type="molecule type" value="Genomic_DNA"/>
</dbReference>
<dbReference type="RefSeq" id="WP_012292767.1">
    <property type="nucleotide sequence ID" value="NC_010382.1"/>
</dbReference>
<dbReference type="SMR" id="B1HM55"/>
<dbReference type="EnsemblBacteria" id="ACA38627">
    <property type="protein sequence ID" value="ACA38627"/>
    <property type="gene ID" value="Bsph_1015"/>
</dbReference>
<dbReference type="KEGG" id="lsp:Bsph_1015"/>
<dbReference type="HOGENOM" id="CLU_050669_0_1_9"/>
<dbReference type="Proteomes" id="UP000002164">
    <property type="component" value="Chromosome"/>
</dbReference>
<dbReference type="GO" id="GO:0005886">
    <property type="term" value="C:plasma membrane"/>
    <property type="evidence" value="ECO:0007669"/>
    <property type="project" value="UniProtKB-SubCell"/>
</dbReference>
<dbReference type="GO" id="GO:0045259">
    <property type="term" value="C:proton-transporting ATP synthase complex"/>
    <property type="evidence" value="ECO:0007669"/>
    <property type="project" value="UniProtKB-KW"/>
</dbReference>
<dbReference type="GO" id="GO:0005524">
    <property type="term" value="F:ATP binding"/>
    <property type="evidence" value="ECO:0007669"/>
    <property type="project" value="UniProtKB-UniRule"/>
</dbReference>
<dbReference type="GO" id="GO:0046933">
    <property type="term" value="F:proton-transporting ATP synthase activity, rotational mechanism"/>
    <property type="evidence" value="ECO:0007669"/>
    <property type="project" value="UniProtKB-UniRule"/>
</dbReference>
<dbReference type="GO" id="GO:0042777">
    <property type="term" value="P:proton motive force-driven plasma membrane ATP synthesis"/>
    <property type="evidence" value="ECO:0007669"/>
    <property type="project" value="UniProtKB-UniRule"/>
</dbReference>
<dbReference type="CDD" id="cd12151">
    <property type="entry name" value="F1-ATPase_gamma"/>
    <property type="match status" value="1"/>
</dbReference>
<dbReference type="FunFam" id="1.10.287.80:FF:000019">
    <property type="entry name" value="ATP synthase gamma chain"/>
    <property type="match status" value="1"/>
</dbReference>
<dbReference type="FunFam" id="3.40.1380.10:FF:000002">
    <property type="entry name" value="ATP synthase gamma chain"/>
    <property type="match status" value="1"/>
</dbReference>
<dbReference type="Gene3D" id="3.40.1380.10">
    <property type="match status" value="1"/>
</dbReference>
<dbReference type="Gene3D" id="1.10.287.80">
    <property type="entry name" value="ATP synthase, gamma subunit, helix hairpin domain"/>
    <property type="match status" value="1"/>
</dbReference>
<dbReference type="HAMAP" id="MF_00815">
    <property type="entry name" value="ATP_synth_gamma_bact"/>
    <property type="match status" value="1"/>
</dbReference>
<dbReference type="InterPro" id="IPR035968">
    <property type="entry name" value="ATP_synth_F1_ATPase_gsu"/>
</dbReference>
<dbReference type="InterPro" id="IPR000131">
    <property type="entry name" value="ATP_synth_F1_gsu"/>
</dbReference>
<dbReference type="InterPro" id="IPR023632">
    <property type="entry name" value="ATP_synth_F1_gsu_CS"/>
</dbReference>
<dbReference type="NCBIfam" id="TIGR01146">
    <property type="entry name" value="ATPsyn_F1gamma"/>
    <property type="match status" value="1"/>
</dbReference>
<dbReference type="PANTHER" id="PTHR11693">
    <property type="entry name" value="ATP SYNTHASE GAMMA CHAIN"/>
    <property type="match status" value="1"/>
</dbReference>
<dbReference type="PANTHER" id="PTHR11693:SF22">
    <property type="entry name" value="ATP SYNTHASE SUBUNIT GAMMA, MITOCHONDRIAL"/>
    <property type="match status" value="1"/>
</dbReference>
<dbReference type="Pfam" id="PF00231">
    <property type="entry name" value="ATP-synt"/>
    <property type="match status" value="1"/>
</dbReference>
<dbReference type="PRINTS" id="PR00126">
    <property type="entry name" value="ATPASEGAMMA"/>
</dbReference>
<dbReference type="SUPFAM" id="SSF52943">
    <property type="entry name" value="ATP synthase (F1-ATPase), gamma subunit"/>
    <property type="match status" value="1"/>
</dbReference>
<dbReference type="PROSITE" id="PS00153">
    <property type="entry name" value="ATPASE_GAMMA"/>
    <property type="match status" value="1"/>
</dbReference>
<protein>
    <recommendedName>
        <fullName evidence="1">ATP synthase gamma chain</fullName>
    </recommendedName>
    <alternativeName>
        <fullName evidence="1">ATP synthase F1 sector gamma subunit</fullName>
    </alternativeName>
    <alternativeName>
        <fullName evidence="1">F-ATPase gamma subunit</fullName>
    </alternativeName>
</protein>
<feature type="chain" id="PRO_1000134174" description="ATP synthase gamma chain">
    <location>
        <begin position="1"/>
        <end position="285"/>
    </location>
</feature>
<evidence type="ECO:0000255" key="1">
    <source>
        <dbReference type="HAMAP-Rule" id="MF_00815"/>
    </source>
</evidence>
<gene>
    <name evidence="1" type="primary">atpG</name>
    <name type="ordered locus">Bsph_1015</name>
</gene>
<proteinExistence type="inferred from homology"/>
<accession>B1HM55</accession>
<organism>
    <name type="scientific">Lysinibacillus sphaericus (strain C3-41)</name>
    <dbReference type="NCBI Taxonomy" id="444177"/>
    <lineage>
        <taxon>Bacteria</taxon>
        <taxon>Bacillati</taxon>
        <taxon>Bacillota</taxon>
        <taxon>Bacilli</taxon>
        <taxon>Bacillales</taxon>
        <taxon>Bacillaceae</taxon>
        <taxon>Lysinibacillus</taxon>
    </lineage>
</organism>
<sequence length="285" mass="31395">MVNLREIKGRINSTKSTKQITKAMQMVSSSKLRRAEQNAKAYVPYMEKIQDVVGAIASGTKDSGHPMLTARPVKKTAYLVIGSDRGLAGAYNSSILRQVQRTIDERHKSKDEYVILAIGRVVRDYFVKRDHNVISDVVGLPDQPTFADIKEIARNAVGMFIDGTYDQLYMYYNHFVSAIANEVTEKKLLPLTDLAPPSSNASYEFEPSGEAILEVLLPQYAESLVYGALLDGKASEHASRMTAMKNATDNASDLISDLSLQYNRARQAAITQEITEIVGGAAALE</sequence>
<keyword id="KW-0066">ATP synthesis</keyword>
<keyword id="KW-1003">Cell membrane</keyword>
<keyword id="KW-0139">CF(1)</keyword>
<keyword id="KW-0375">Hydrogen ion transport</keyword>
<keyword id="KW-0406">Ion transport</keyword>
<keyword id="KW-0472">Membrane</keyword>
<keyword id="KW-0813">Transport</keyword>
<name>ATPG_LYSSC</name>
<reference key="1">
    <citation type="journal article" date="2008" name="J. Bacteriol.">
        <title>Complete genome sequence of the mosquitocidal bacterium Bacillus sphaericus C3-41 and comparison with those of closely related Bacillus species.</title>
        <authorList>
            <person name="Hu X."/>
            <person name="Fan W."/>
            <person name="Han B."/>
            <person name="Liu H."/>
            <person name="Zheng D."/>
            <person name="Li Q."/>
            <person name="Dong W."/>
            <person name="Yan J."/>
            <person name="Gao M."/>
            <person name="Berry C."/>
            <person name="Yuan Z."/>
        </authorList>
    </citation>
    <scope>NUCLEOTIDE SEQUENCE [LARGE SCALE GENOMIC DNA]</scope>
    <source>
        <strain>C3-41</strain>
    </source>
</reference>
<comment type="function">
    <text evidence="1">Produces ATP from ADP in the presence of a proton gradient across the membrane. The gamma chain is believed to be important in regulating ATPase activity and the flow of protons through the CF(0) complex.</text>
</comment>
<comment type="subunit">
    <text evidence="1">F-type ATPases have 2 components, CF(1) - the catalytic core - and CF(0) - the membrane proton channel. CF(1) has five subunits: alpha(3), beta(3), gamma(1), delta(1), epsilon(1). CF(0) has three main subunits: a, b and c.</text>
</comment>
<comment type="subcellular location">
    <subcellularLocation>
        <location evidence="1">Cell membrane</location>
        <topology evidence="1">Peripheral membrane protein</topology>
    </subcellularLocation>
</comment>
<comment type="similarity">
    <text evidence="1">Belongs to the ATPase gamma chain family.</text>
</comment>